<gene>
    <name evidence="1" type="primary">rpoA</name>
    <name type="ordered locus">CPn_0626</name>
    <name type="ordered locus">CP_0121</name>
    <name type="ordered locus">CpB0652</name>
</gene>
<proteinExistence type="inferred from homology"/>
<name>RPOA_CHLPN</name>
<dbReference type="EC" id="2.7.7.6" evidence="1"/>
<dbReference type="EMBL" id="AE001363">
    <property type="protein sequence ID" value="AAD18765.1"/>
    <property type="molecule type" value="Genomic_DNA"/>
</dbReference>
<dbReference type="EMBL" id="AE002161">
    <property type="protein sequence ID" value="AAF38004.1"/>
    <property type="status" value="ALT_INIT"/>
    <property type="molecule type" value="Genomic_DNA"/>
</dbReference>
<dbReference type="EMBL" id="BA000008">
    <property type="protein sequence ID" value="BAA98833.1"/>
    <property type="molecule type" value="Genomic_DNA"/>
</dbReference>
<dbReference type="EMBL" id="AE009440">
    <property type="protein sequence ID" value="AAP98581.1"/>
    <property type="molecule type" value="Genomic_DNA"/>
</dbReference>
<dbReference type="PIR" id="D72053">
    <property type="entry name" value="D72053"/>
</dbReference>
<dbReference type="PIR" id="E81613">
    <property type="entry name" value="E81613"/>
</dbReference>
<dbReference type="PIR" id="G86568">
    <property type="entry name" value="G86568"/>
</dbReference>
<dbReference type="RefSeq" id="NP_224822.1">
    <property type="nucleotide sequence ID" value="NC_000922.1"/>
</dbReference>
<dbReference type="RefSeq" id="WP_010883264.1">
    <property type="nucleotide sequence ID" value="NZ_LN847257.1"/>
</dbReference>
<dbReference type="RefSeq" id="WP_010895349.1">
    <property type="nucleotide sequence ID" value="NZ_LN846995.1"/>
</dbReference>
<dbReference type="SMR" id="Q9Z7S8"/>
<dbReference type="STRING" id="406984.CPK_ORF00026"/>
<dbReference type="GeneID" id="45050676"/>
<dbReference type="KEGG" id="cpa:CP_0121"/>
<dbReference type="KEGG" id="cpj:rpoA"/>
<dbReference type="KEGG" id="cpn:CPn_0626"/>
<dbReference type="KEGG" id="cpt:CpB0652"/>
<dbReference type="PATRIC" id="fig|115713.3.peg.696"/>
<dbReference type="eggNOG" id="COG0202">
    <property type="taxonomic scope" value="Bacteria"/>
</dbReference>
<dbReference type="HOGENOM" id="CLU_053084_0_1_0"/>
<dbReference type="OrthoDB" id="9805706at2"/>
<dbReference type="Proteomes" id="UP000000583">
    <property type="component" value="Chromosome"/>
</dbReference>
<dbReference type="Proteomes" id="UP000000801">
    <property type="component" value="Chromosome"/>
</dbReference>
<dbReference type="GO" id="GO:0005737">
    <property type="term" value="C:cytoplasm"/>
    <property type="evidence" value="ECO:0007669"/>
    <property type="project" value="UniProtKB-ARBA"/>
</dbReference>
<dbReference type="GO" id="GO:0000428">
    <property type="term" value="C:DNA-directed RNA polymerase complex"/>
    <property type="evidence" value="ECO:0007669"/>
    <property type="project" value="UniProtKB-KW"/>
</dbReference>
<dbReference type="GO" id="GO:0003677">
    <property type="term" value="F:DNA binding"/>
    <property type="evidence" value="ECO:0007669"/>
    <property type="project" value="UniProtKB-UniRule"/>
</dbReference>
<dbReference type="GO" id="GO:0003899">
    <property type="term" value="F:DNA-directed RNA polymerase activity"/>
    <property type="evidence" value="ECO:0007669"/>
    <property type="project" value="UniProtKB-UniRule"/>
</dbReference>
<dbReference type="GO" id="GO:0046983">
    <property type="term" value="F:protein dimerization activity"/>
    <property type="evidence" value="ECO:0007669"/>
    <property type="project" value="InterPro"/>
</dbReference>
<dbReference type="GO" id="GO:0006351">
    <property type="term" value="P:DNA-templated transcription"/>
    <property type="evidence" value="ECO:0007669"/>
    <property type="project" value="UniProtKB-UniRule"/>
</dbReference>
<dbReference type="CDD" id="cd06928">
    <property type="entry name" value="RNAP_alpha_NTD"/>
    <property type="match status" value="1"/>
</dbReference>
<dbReference type="FunFam" id="1.10.150.20:FF:000078">
    <property type="entry name" value="DNA-directed RNA polymerase subunit alpha"/>
    <property type="match status" value="1"/>
</dbReference>
<dbReference type="Gene3D" id="1.10.150.20">
    <property type="entry name" value="5' to 3' exonuclease, C-terminal subdomain"/>
    <property type="match status" value="1"/>
</dbReference>
<dbReference type="Gene3D" id="2.170.120.12">
    <property type="entry name" value="DNA-directed RNA polymerase, insert domain"/>
    <property type="match status" value="1"/>
</dbReference>
<dbReference type="Gene3D" id="3.30.1360.10">
    <property type="entry name" value="RNA polymerase, RBP11-like subunit"/>
    <property type="match status" value="1"/>
</dbReference>
<dbReference type="HAMAP" id="MF_00059">
    <property type="entry name" value="RNApol_bact_RpoA"/>
    <property type="match status" value="1"/>
</dbReference>
<dbReference type="InterPro" id="IPR011262">
    <property type="entry name" value="DNA-dir_RNA_pol_insert"/>
</dbReference>
<dbReference type="InterPro" id="IPR011263">
    <property type="entry name" value="DNA-dir_RNA_pol_RpoA/D/Rpb3"/>
</dbReference>
<dbReference type="InterPro" id="IPR011773">
    <property type="entry name" value="DNA-dir_RpoA"/>
</dbReference>
<dbReference type="InterPro" id="IPR036603">
    <property type="entry name" value="RBP11-like"/>
</dbReference>
<dbReference type="InterPro" id="IPR011260">
    <property type="entry name" value="RNAP_asu_C"/>
</dbReference>
<dbReference type="InterPro" id="IPR036643">
    <property type="entry name" value="RNApol_insert_sf"/>
</dbReference>
<dbReference type="NCBIfam" id="NF003513">
    <property type="entry name" value="PRK05182.1-2"/>
    <property type="match status" value="1"/>
</dbReference>
<dbReference type="NCBIfam" id="NF003517">
    <property type="entry name" value="PRK05182.2-3"/>
    <property type="match status" value="1"/>
</dbReference>
<dbReference type="NCBIfam" id="NF003519">
    <property type="entry name" value="PRK05182.2-5"/>
    <property type="match status" value="1"/>
</dbReference>
<dbReference type="NCBIfam" id="TIGR02027">
    <property type="entry name" value="rpoA"/>
    <property type="match status" value="1"/>
</dbReference>
<dbReference type="Pfam" id="PF01000">
    <property type="entry name" value="RNA_pol_A_bac"/>
    <property type="match status" value="1"/>
</dbReference>
<dbReference type="Pfam" id="PF03118">
    <property type="entry name" value="RNA_pol_A_CTD"/>
    <property type="match status" value="1"/>
</dbReference>
<dbReference type="Pfam" id="PF01193">
    <property type="entry name" value="RNA_pol_L"/>
    <property type="match status" value="1"/>
</dbReference>
<dbReference type="SMART" id="SM00662">
    <property type="entry name" value="RPOLD"/>
    <property type="match status" value="1"/>
</dbReference>
<dbReference type="SUPFAM" id="SSF47789">
    <property type="entry name" value="C-terminal domain of RNA polymerase alpha subunit"/>
    <property type="match status" value="1"/>
</dbReference>
<dbReference type="SUPFAM" id="SSF56553">
    <property type="entry name" value="Insert subdomain of RNA polymerase alpha subunit"/>
    <property type="match status" value="1"/>
</dbReference>
<dbReference type="SUPFAM" id="SSF55257">
    <property type="entry name" value="RBP11-like subunits of RNA polymerase"/>
    <property type="match status" value="1"/>
</dbReference>
<accession>Q9Z7S8</accession>
<accession>Q9JSC8</accession>
<accession>Q9K2D7</accession>
<feature type="chain" id="PRO_0000175290" description="DNA-directed RNA polymerase subunit alpha">
    <location>
        <begin position="1"/>
        <end position="374"/>
    </location>
</feature>
<feature type="region of interest" description="Alpha N-terminal domain (alpha-NTD)" evidence="1">
    <location>
        <begin position="1"/>
        <end position="257"/>
    </location>
</feature>
<feature type="region of interest" description="Alpha C-terminal domain (alpha-CTD)" evidence="1">
    <location>
        <begin position="274"/>
        <end position="374"/>
    </location>
</feature>
<feature type="sequence variant" description="In strain: CWL029 and TW-183.">
    <original>I</original>
    <variation>T</variation>
    <location>
        <position position="372"/>
    </location>
</feature>
<sequence>MSDNAHNLLYDKFELPEAVKMLPVEGLPIDKHARFIAEPLERGMGHTLGNALRRALLIGLEAPAIISFAMTGVLHEYMAIEGVIEDVTNIILNLKGALLKKYPMQDSSLGRTTQVLKASISIDASDLAAANGQKEVTLQDLLQEGDFEAVNPDQVIFTVTQPIQLEVVLRIAFGRGYTPSERIVLEDKGVYEIVLDAAFSPVTLVNYFVEDTRVGQDTDFDRLVLIVETDGRVTPKEALAFSTQILTKHFSIFENMDEKKIVFEEAISIEKENKDDILHKLILGINEIELSVRSTNCLSNANIETIGELVIMPEPRLLQFRNFGKKSLCEIKNKLKEMKLELGMDLTQFGVGLDNVKEKMKWYAEKIRAKNIKG</sequence>
<protein>
    <recommendedName>
        <fullName evidence="1">DNA-directed RNA polymerase subunit alpha</fullName>
        <shortName evidence="1">RNAP subunit alpha</shortName>
        <ecNumber evidence="1">2.7.7.6</ecNumber>
    </recommendedName>
    <alternativeName>
        <fullName evidence="1">RNA polymerase subunit alpha</fullName>
    </alternativeName>
    <alternativeName>
        <fullName evidence="1">Transcriptase subunit alpha</fullName>
    </alternativeName>
</protein>
<evidence type="ECO:0000255" key="1">
    <source>
        <dbReference type="HAMAP-Rule" id="MF_00059"/>
    </source>
</evidence>
<evidence type="ECO:0000305" key="2"/>
<keyword id="KW-0240">DNA-directed RNA polymerase</keyword>
<keyword id="KW-0548">Nucleotidyltransferase</keyword>
<keyword id="KW-0804">Transcription</keyword>
<keyword id="KW-0808">Transferase</keyword>
<comment type="function">
    <text evidence="1">DNA-dependent RNA polymerase catalyzes the transcription of DNA into RNA using the four ribonucleoside triphosphates as substrates.</text>
</comment>
<comment type="catalytic activity">
    <reaction evidence="1">
        <text>RNA(n) + a ribonucleoside 5'-triphosphate = RNA(n+1) + diphosphate</text>
        <dbReference type="Rhea" id="RHEA:21248"/>
        <dbReference type="Rhea" id="RHEA-COMP:14527"/>
        <dbReference type="Rhea" id="RHEA-COMP:17342"/>
        <dbReference type="ChEBI" id="CHEBI:33019"/>
        <dbReference type="ChEBI" id="CHEBI:61557"/>
        <dbReference type="ChEBI" id="CHEBI:140395"/>
        <dbReference type="EC" id="2.7.7.6"/>
    </reaction>
</comment>
<comment type="subunit">
    <text evidence="1">Homodimer. The RNAP catalytic core consists of 2 alpha, 1 beta, 1 beta' and 1 omega subunit. When a sigma factor is associated with the core the holoenzyme is formed, which can initiate transcription.</text>
</comment>
<comment type="domain">
    <text evidence="1">The N-terminal domain is essential for RNAP assembly and basal transcription, whereas the C-terminal domain is involved in interaction with transcriptional regulators and with upstream promoter elements.</text>
</comment>
<comment type="similarity">
    <text evidence="1">Belongs to the RNA polymerase alpha chain family.</text>
</comment>
<comment type="sequence caution" evidence="2">
    <conflict type="erroneous initiation">
        <sequence resource="EMBL-CDS" id="AAF38004"/>
    </conflict>
</comment>
<organism>
    <name type="scientific">Chlamydia pneumoniae</name>
    <name type="common">Chlamydophila pneumoniae</name>
    <dbReference type="NCBI Taxonomy" id="83558"/>
    <lineage>
        <taxon>Bacteria</taxon>
        <taxon>Pseudomonadati</taxon>
        <taxon>Chlamydiota</taxon>
        <taxon>Chlamydiia</taxon>
        <taxon>Chlamydiales</taxon>
        <taxon>Chlamydiaceae</taxon>
        <taxon>Chlamydia/Chlamydophila group</taxon>
        <taxon>Chlamydia</taxon>
    </lineage>
</organism>
<reference key="1">
    <citation type="journal article" date="1999" name="Nat. Genet.">
        <title>Comparative genomes of Chlamydia pneumoniae and C. trachomatis.</title>
        <authorList>
            <person name="Kalman S."/>
            <person name="Mitchell W.P."/>
            <person name="Marathe R."/>
            <person name="Lammel C.J."/>
            <person name="Fan J."/>
            <person name="Hyman R.W."/>
            <person name="Olinger L."/>
            <person name="Grimwood J."/>
            <person name="Davis R.W."/>
            <person name="Stephens R.S."/>
        </authorList>
    </citation>
    <scope>NUCLEOTIDE SEQUENCE [LARGE SCALE GENOMIC DNA]</scope>
    <source>
        <strain>CWL029</strain>
    </source>
</reference>
<reference key="2">
    <citation type="journal article" date="2000" name="Nucleic Acids Res.">
        <title>Genome sequences of Chlamydia trachomatis MoPn and Chlamydia pneumoniae AR39.</title>
        <authorList>
            <person name="Read T.D."/>
            <person name="Brunham R.C."/>
            <person name="Shen C."/>
            <person name="Gill S.R."/>
            <person name="Heidelberg J.F."/>
            <person name="White O."/>
            <person name="Hickey E.K."/>
            <person name="Peterson J.D."/>
            <person name="Utterback T.R."/>
            <person name="Berry K.J."/>
            <person name="Bass S."/>
            <person name="Linher K.D."/>
            <person name="Weidman J.F."/>
            <person name="Khouri H.M."/>
            <person name="Craven B."/>
            <person name="Bowman C."/>
            <person name="Dodson R.J."/>
            <person name="Gwinn M.L."/>
            <person name="Nelson W.C."/>
            <person name="DeBoy R.T."/>
            <person name="Kolonay J.F."/>
            <person name="McClarty G."/>
            <person name="Salzberg S.L."/>
            <person name="Eisen J.A."/>
            <person name="Fraser C.M."/>
        </authorList>
    </citation>
    <scope>NUCLEOTIDE SEQUENCE [LARGE SCALE GENOMIC DNA]</scope>
    <source>
        <strain>AR39</strain>
    </source>
</reference>
<reference key="3">
    <citation type="journal article" date="2000" name="Nucleic Acids Res.">
        <title>Comparison of whole genome sequences of Chlamydia pneumoniae J138 from Japan and CWL029 from USA.</title>
        <authorList>
            <person name="Shirai M."/>
            <person name="Hirakawa H."/>
            <person name="Kimoto M."/>
            <person name="Tabuchi M."/>
            <person name="Kishi F."/>
            <person name="Ouchi K."/>
            <person name="Shiba T."/>
            <person name="Ishii K."/>
            <person name="Hattori M."/>
            <person name="Kuhara S."/>
            <person name="Nakazawa T."/>
        </authorList>
    </citation>
    <scope>NUCLEOTIDE SEQUENCE [LARGE SCALE GENOMIC DNA]</scope>
    <source>
        <strain>J138</strain>
    </source>
</reference>
<reference key="4">
    <citation type="submission" date="2002-05" db="EMBL/GenBank/DDBJ databases">
        <title>The genome sequence of Chlamydia pneumoniae TW183 and comparison with other Chlamydia strains based on whole genome sequence analysis.</title>
        <authorList>
            <person name="Geng M.M."/>
            <person name="Schuhmacher A."/>
            <person name="Muehldorfer I."/>
            <person name="Bensch K.W."/>
            <person name="Schaefer K.P."/>
            <person name="Schneider S."/>
            <person name="Pohl T."/>
            <person name="Essig A."/>
            <person name="Marre R."/>
            <person name="Melchers K."/>
        </authorList>
    </citation>
    <scope>NUCLEOTIDE SEQUENCE [LARGE SCALE GENOMIC DNA]</scope>
    <source>
        <strain>TW-183</strain>
    </source>
</reference>